<gene>
    <name evidence="7" type="primary">apdC</name>
    <name type="ORF">AN8409</name>
</gene>
<evidence type="ECO:0000250" key="1">
    <source>
        <dbReference type="UniProtKB" id="Q9Y7D0"/>
    </source>
</evidence>
<evidence type="ECO:0000255" key="2"/>
<evidence type="ECO:0000269" key="3">
    <source>
    </source>
</evidence>
<evidence type="ECO:0000269" key="4">
    <source>
    </source>
</evidence>
<evidence type="ECO:0000269" key="5">
    <source>
    </source>
</evidence>
<evidence type="ECO:0000269" key="6">
    <source ref="5"/>
</evidence>
<evidence type="ECO:0000303" key="7">
    <source>
    </source>
</evidence>
<evidence type="ECO:0000305" key="8"/>
<evidence type="ECO:0000305" key="9">
    <source>
    </source>
</evidence>
<evidence type="ECO:0000305" key="10">
    <source ref="5"/>
</evidence>
<dbReference type="EC" id="1.-.-.-" evidence="9"/>
<dbReference type="EMBL" id="BN001305">
    <property type="protein sequence ID" value="CBF80481.1"/>
    <property type="molecule type" value="Genomic_DNA"/>
</dbReference>
<dbReference type="EMBL" id="AACD01000153">
    <property type="protein sequence ID" value="EAA67031.1"/>
    <property type="molecule type" value="Genomic_DNA"/>
</dbReference>
<dbReference type="RefSeq" id="XP_681678.1">
    <property type="nucleotide sequence ID" value="XM_676586.1"/>
</dbReference>
<dbReference type="SMR" id="Q5ATH1"/>
<dbReference type="STRING" id="227321.Q5ATH1"/>
<dbReference type="EnsemblFungi" id="CBF80481">
    <property type="protein sequence ID" value="CBF80481"/>
    <property type="gene ID" value="ANIA_08409"/>
</dbReference>
<dbReference type="KEGG" id="ani:ANIA_08409"/>
<dbReference type="eggNOG" id="KOG1198">
    <property type="taxonomic scope" value="Eukaryota"/>
</dbReference>
<dbReference type="HOGENOM" id="CLU_026673_16_1_1"/>
<dbReference type="InParanoid" id="Q5ATH1"/>
<dbReference type="OMA" id="MAICYEA"/>
<dbReference type="OrthoDB" id="48317at2759"/>
<dbReference type="Proteomes" id="UP000000560">
    <property type="component" value="Chromosome V"/>
</dbReference>
<dbReference type="GO" id="GO:0000166">
    <property type="term" value="F:nucleotide binding"/>
    <property type="evidence" value="ECO:0007669"/>
    <property type="project" value="UniProtKB-KW"/>
</dbReference>
<dbReference type="GO" id="GO:0016651">
    <property type="term" value="F:oxidoreductase activity, acting on NAD(P)H"/>
    <property type="evidence" value="ECO:0007669"/>
    <property type="project" value="InterPro"/>
</dbReference>
<dbReference type="CDD" id="cd08249">
    <property type="entry name" value="enoyl_reductase_like"/>
    <property type="match status" value="1"/>
</dbReference>
<dbReference type="Gene3D" id="3.90.180.10">
    <property type="entry name" value="Medium-chain alcohol dehydrogenases, catalytic domain"/>
    <property type="match status" value="1"/>
</dbReference>
<dbReference type="Gene3D" id="3.40.50.720">
    <property type="entry name" value="NAD(P)-binding Rossmann-like Domain"/>
    <property type="match status" value="1"/>
</dbReference>
<dbReference type="InterPro" id="IPR013154">
    <property type="entry name" value="ADH-like_N"/>
</dbReference>
<dbReference type="InterPro" id="IPR011032">
    <property type="entry name" value="GroES-like_sf"/>
</dbReference>
<dbReference type="InterPro" id="IPR036291">
    <property type="entry name" value="NAD(P)-bd_dom_sf"/>
</dbReference>
<dbReference type="InterPro" id="IPR020843">
    <property type="entry name" value="PKS_ER"/>
</dbReference>
<dbReference type="InterPro" id="IPR047122">
    <property type="entry name" value="Trans-enoyl_RdTase-like"/>
</dbReference>
<dbReference type="PANTHER" id="PTHR45348">
    <property type="entry name" value="HYPOTHETICAL OXIDOREDUCTASE (EUROFUNG)"/>
    <property type="match status" value="1"/>
</dbReference>
<dbReference type="PANTHER" id="PTHR45348:SF6">
    <property type="entry name" value="TRANS-ENOYL REDUCTASE APDC"/>
    <property type="match status" value="1"/>
</dbReference>
<dbReference type="Pfam" id="PF08240">
    <property type="entry name" value="ADH_N"/>
    <property type="match status" value="1"/>
</dbReference>
<dbReference type="SMART" id="SM00829">
    <property type="entry name" value="PKS_ER"/>
    <property type="match status" value="1"/>
</dbReference>
<dbReference type="SUPFAM" id="SSF50129">
    <property type="entry name" value="GroES-like"/>
    <property type="match status" value="1"/>
</dbReference>
<dbReference type="SUPFAM" id="SSF51735">
    <property type="entry name" value="NAD(P)-binding Rossmann-fold domains"/>
    <property type="match status" value="1"/>
</dbReference>
<name>APDC_EMENI</name>
<reference key="1">
    <citation type="journal article" date="2005" name="Nature">
        <title>Sequencing of Aspergillus nidulans and comparative analysis with A. fumigatus and A. oryzae.</title>
        <authorList>
            <person name="Galagan J.E."/>
            <person name="Calvo S.E."/>
            <person name="Cuomo C."/>
            <person name="Ma L.-J."/>
            <person name="Wortman J.R."/>
            <person name="Batzoglou S."/>
            <person name="Lee S.-I."/>
            <person name="Bastuerkmen M."/>
            <person name="Spevak C.C."/>
            <person name="Clutterbuck J."/>
            <person name="Kapitonov V."/>
            <person name="Jurka J."/>
            <person name="Scazzocchio C."/>
            <person name="Farman M.L."/>
            <person name="Butler J."/>
            <person name="Purcell S."/>
            <person name="Harris S."/>
            <person name="Braus G.H."/>
            <person name="Draht O."/>
            <person name="Busch S."/>
            <person name="D'Enfert C."/>
            <person name="Bouchier C."/>
            <person name="Goldman G.H."/>
            <person name="Bell-Pedersen D."/>
            <person name="Griffiths-Jones S."/>
            <person name="Doonan J.H."/>
            <person name="Yu J."/>
            <person name="Vienken K."/>
            <person name="Pain A."/>
            <person name="Freitag M."/>
            <person name="Selker E.U."/>
            <person name="Archer D.B."/>
            <person name="Penalva M.A."/>
            <person name="Oakley B.R."/>
            <person name="Momany M."/>
            <person name="Tanaka T."/>
            <person name="Kumagai T."/>
            <person name="Asai K."/>
            <person name="Machida M."/>
            <person name="Nierman W.C."/>
            <person name="Denning D.W."/>
            <person name="Caddick M.X."/>
            <person name="Hynes M."/>
            <person name="Paoletti M."/>
            <person name="Fischer R."/>
            <person name="Miller B.L."/>
            <person name="Dyer P.S."/>
            <person name="Sachs M.S."/>
            <person name="Osmani S.A."/>
            <person name="Birren B.W."/>
        </authorList>
    </citation>
    <scope>NUCLEOTIDE SEQUENCE [LARGE SCALE GENOMIC DNA]</scope>
    <source>
        <strain>FGSC A4 / ATCC 38163 / CBS 112.46 / NRRL 194 / M139</strain>
    </source>
</reference>
<reference key="2">
    <citation type="journal article" date="2009" name="Fungal Genet. Biol.">
        <title>The 2008 update of the Aspergillus nidulans genome annotation: a community effort.</title>
        <authorList>
            <person name="Wortman J.R."/>
            <person name="Gilsenan J.M."/>
            <person name="Joardar V."/>
            <person name="Deegan J."/>
            <person name="Clutterbuck J."/>
            <person name="Andersen M.R."/>
            <person name="Archer D."/>
            <person name="Bencina M."/>
            <person name="Braus G."/>
            <person name="Coutinho P."/>
            <person name="von Dohren H."/>
            <person name="Doonan J."/>
            <person name="Driessen A.J."/>
            <person name="Durek P."/>
            <person name="Espeso E."/>
            <person name="Fekete E."/>
            <person name="Flipphi M."/>
            <person name="Estrada C.G."/>
            <person name="Geysens S."/>
            <person name="Goldman G."/>
            <person name="de Groot P.W."/>
            <person name="Hansen K."/>
            <person name="Harris S.D."/>
            <person name="Heinekamp T."/>
            <person name="Helmstaedt K."/>
            <person name="Henrissat B."/>
            <person name="Hofmann G."/>
            <person name="Homan T."/>
            <person name="Horio T."/>
            <person name="Horiuchi H."/>
            <person name="James S."/>
            <person name="Jones M."/>
            <person name="Karaffa L."/>
            <person name="Karanyi Z."/>
            <person name="Kato M."/>
            <person name="Keller N."/>
            <person name="Kelly D.E."/>
            <person name="Kiel J.A."/>
            <person name="Kim J.M."/>
            <person name="van der Klei I.J."/>
            <person name="Klis F.M."/>
            <person name="Kovalchuk A."/>
            <person name="Krasevec N."/>
            <person name="Kubicek C.P."/>
            <person name="Liu B."/>
            <person name="Maccabe A."/>
            <person name="Meyer V."/>
            <person name="Mirabito P."/>
            <person name="Miskei M."/>
            <person name="Mos M."/>
            <person name="Mullins J."/>
            <person name="Nelson D.R."/>
            <person name="Nielsen J."/>
            <person name="Oakley B.R."/>
            <person name="Osmani S.A."/>
            <person name="Pakula T."/>
            <person name="Paszewski A."/>
            <person name="Paulsen I."/>
            <person name="Pilsyk S."/>
            <person name="Pocsi I."/>
            <person name="Punt P.J."/>
            <person name="Ram A.F."/>
            <person name="Ren Q."/>
            <person name="Robellet X."/>
            <person name="Robson G."/>
            <person name="Seiboth B."/>
            <person name="van Solingen P."/>
            <person name="Specht T."/>
            <person name="Sun J."/>
            <person name="Taheri-Talesh N."/>
            <person name="Takeshita N."/>
            <person name="Ussery D."/>
            <person name="vanKuyk P.A."/>
            <person name="Visser H."/>
            <person name="van de Vondervoort P.J."/>
            <person name="de Vries R.P."/>
            <person name="Walton J."/>
            <person name="Xiang X."/>
            <person name="Xiong Y."/>
            <person name="Zeng A.P."/>
            <person name="Brandt B.W."/>
            <person name="Cornell M.J."/>
            <person name="van den Hondel C.A."/>
            <person name="Visser J."/>
            <person name="Oliver S.G."/>
            <person name="Turner G."/>
        </authorList>
    </citation>
    <scope>GENOME REANNOTATION</scope>
    <source>
        <strain>FGSC A4 / ATCC 38163 / CBS 112.46 / NRRL 194 / M139</strain>
    </source>
</reference>
<reference key="3">
    <citation type="journal article" date="2007" name="Nat. Chem. Biol.">
        <title>Genomics-driven discovery of PKS-NRPS hybrid metabolites from Aspergillus nidulans.</title>
        <authorList>
            <person name="Bergmann S."/>
            <person name="Schuemann J."/>
            <person name="Scherlach K."/>
            <person name="Lange C."/>
            <person name="Brakhage A.A."/>
            <person name="Hertweck C."/>
        </authorList>
    </citation>
    <scope>FUNCTION</scope>
    <scope>INDUCTION</scope>
    <scope>PATHWAY</scope>
</reference>
<reference key="4">
    <citation type="journal article" date="2010" name="J. Am. Chem. Soc.">
        <title>Analysis of intact and dissected fungal polyketide synthase-nonribosomal peptide synthetase in vitro and in Saccharomyces cerevisiae.</title>
        <authorList>
            <person name="Xu W."/>
            <person name="Cai X."/>
            <person name="Jung M.E."/>
            <person name="Tang Y."/>
        </authorList>
    </citation>
    <scope>FUNCTION</scope>
    <scope>CATALYTIC ACTIVITY</scope>
    <scope>PATHWAY</scope>
</reference>
<reference key="5">
    <citation type="journal article" date="2013" name="Chem. Sci.">
        <title>One pathway, many compounds: Heterologous expression of a fungal biosynthetic pathway reveals its intrinsic potential for diversity.</title>
        <authorList>
            <person name="Wasil Z."/>
            <person name="Pahirulzaman K.A.K."/>
            <person name="Butts C."/>
            <person name="Simpson T.J."/>
            <person name="Lazarus C.M."/>
            <person name="Cox R.J."/>
        </authorList>
    </citation>
    <scope>FUNCTION</scope>
    <scope>CATALYTIC ACTIVITY</scope>
    <scope>PATHWAY</scope>
</reference>
<reference key="6">
    <citation type="journal article" date="2014" name="Org. Lett.">
        <title>Methylation-dependent acyl transfer between polyketide synthase and nonribosomal peptide synthetase modules in fungal natural product biosynthesis.</title>
        <authorList>
            <person name="Zou Y."/>
            <person name="Xu W."/>
            <person name="Tsunematsu Y."/>
            <person name="Tang M."/>
            <person name="Watanabe K."/>
            <person name="Tang Y."/>
        </authorList>
    </citation>
    <scope>FUNCTION</scope>
</reference>
<sequence length="333" mass="36095">MIPPKQQTALKITPEGRIAAVSSPLPSLQDNELLVCVKSIALNPFDAKSAEMSPTIGATLGCDFAGKIVATGSNANDFNFSIGDRVCGCVFGNNPNRLDNGAFAEYVAVPADLLLRIPEHMDYNEAATLGVGLATVGMSLYHCLRLPMKPEQAGKSPSGYAAITTCSPHNFNLVKSLGATAAFDYHSPTCGRQIRDFSSGNLWYALDCITDTRSMAVCYEAIGPSGGRYLSLDPFPIRGHTRRSVKPNWVLSVTMYNQPIPWKRPFKRDACPQDLEFAKSWFQIAQRMIDAGEIRPHTSDVKAGGWNGIPGGLELLQKGEVSGRKLVYEVASH</sequence>
<feature type="chain" id="PRO_0000438444" description="Trans-enoyl reductase apdC">
    <location>
        <begin position="1"/>
        <end position="333"/>
    </location>
</feature>
<feature type="binding site" evidence="1">
    <location>
        <begin position="45"/>
        <end position="48"/>
    </location>
    <ligand>
        <name>NADP(+)</name>
        <dbReference type="ChEBI" id="CHEBI:58349"/>
    </ligand>
</feature>
<feature type="binding site" evidence="2">
    <location>
        <begin position="131"/>
        <end position="138"/>
    </location>
    <ligand>
        <name>substrate</name>
    </ligand>
</feature>
<feature type="binding site" evidence="1">
    <location>
        <begin position="167"/>
        <end position="170"/>
    </location>
    <ligand>
        <name>NADP(+)</name>
        <dbReference type="ChEBI" id="CHEBI:58349"/>
    </ligand>
</feature>
<feature type="binding site" evidence="1">
    <location>
        <position position="185"/>
    </location>
    <ligand>
        <name>NADP(+)</name>
        <dbReference type="ChEBI" id="CHEBI:58349"/>
    </ligand>
</feature>
<feature type="binding site" evidence="1">
    <location>
        <begin position="232"/>
        <end position="233"/>
    </location>
    <ligand>
        <name>NADP(+)</name>
        <dbReference type="ChEBI" id="CHEBI:58349"/>
    </ligand>
</feature>
<feature type="binding site" evidence="2">
    <location>
        <begin position="252"/>
        <end position="256"/>
    </location>
    <ligand>
        <name>substrate</name>
    </ligand>
</feature>
<feature type="binding site" evidence="1">
    <location>
        <begin position="321"/>
        <end position="322"/>
    </location>
    <ligand>
        <name>NADP(+)</name>
        <dbReference type="ChEBI" id="CHEBI:58349"/>
    </ligand>
</feature>
<proteinExistence type="evidence at protein level"/>
<accession>Q5ATH1</accession>
<accession>C8VEB0</accession>
<comment type="function">
    <text evidence="3 4 5 6 10">Trans-enoyl reductase; part of the gene cluster that mediates the biosynthesis of aspyridones (PubMed:17369821, PubMed:20828130, Ref.5). The polyketide-amino acid backbone preaspyridone A is first assembled by the PKS-NRPS hybrid apdA (PubMed:17369821, PubMed:20828130). The assembly of preaspyridone A is initiated by loading of malonyl-CoA onto apdA, followed by decarboxylation to yield the acetyl starter unit (PubMed:20828130). The growing polyketide chain then elongates into a tetraketide (PubMed:20828130). The adpA PKS module catalyzes three Claisen condensations, as well as beta-keto processing and methylation (PubMed:17369821, PubMed:20828130). Alpha-methylation step during polyketide synthesis is a prerequisite and a key checkpoint for chain transfer between PKS and NRPS modules (PubMed:25494235). The downstream NRPS module contains the condensation (C), adenylation (A), and thiolation (T) domains and catalyzes the incorporation of tyrosine via the formation of the L-tyrosinyl-thioester and the amide linkage between L-tyrosinyl-thioester and the tetraketide (PubMed:20828130). The bimodular assembly line is terminated with a reductase (R) domain that facilitates formation and release of the tetramic acid product (PubMed:20828130). Because apdA lacks a designated enoylreductase (ER) domain, the required activity is provided the enoyl reductase apdC (PubMed:17369821, PubMed:20828130, Ref.5). ApdC appears to operate with different stereoselectivity in different PKS cycle (Ref.5). Combined with apdC, apdA is proposed to synthesize preaspyridone A via about 20 enzymatic steps (PubMed:20828130). A number of oxidative steps performed successively by the cytochrome P450 monooxygenases apdE and apdB are required for the conversion of preaspyridone A to aspyridone A (PubMed:17369821). The cytochrome P450 monooxygenase apdE is responsible for the oxidative dephenylation of preaspyridone A (Ref.5). Finally, the predicted FAD-dependent monooxygenase apdD and the acyl-CoA dehydrogenase apdG may be involved in the transformation of aspyridone A into aspyridone B (Probable) (PubMed:17369821).</text>
</comment>
<comment type="pathway">
    <text evidence="3 4 6">Secondary metabolite biosynthesis.</text>
</comment>
<comment type="subunit">
    <text evidence="1">Monomer.</text>
</comment>
<comment type="induction">
    <text evidence="3">Expression is positively regulated by the aspyridones cluster specific transcription regulator apdR (PubMed:17369821).</text>
</comment>
<comment type="similarity">
    <text evidence="8">Belongs to the zinc-containing alcohol dehydrogenase family.</text>
</comment>
<organism>
    <name type="scientific">Emericella nidulans (strain FGSC A4 / ATCC 38163 / CBS 112.46 / NRRL 194 / M139)</name>
    <name type="common">Aspergillus nidulans</name>
    <dbReference type="NCBI Taxonomy" id="227321"/>
    <lineage>
        <taxon>Eukaryota</taxon>
        <taxon>Fungi</taxon>
        <taxon>Dikarya</taxon>
        <taxon>Ascomycota</taxon>
        <taxon>Pezizomycotina</taxon>
        <taxon>Eurotiomycetes</taxon>
        <taxon>Eurotiomycetidae</taxon>
        <taxon>Eurotiales</taxon>
        <taxon>Aspergillaceae</taxon>
        <taxon>Aspergillus</taxon>
        <taxon>Aspergillus subgen. Nidulantes</taxon>
    </lineage>
</organism>
<protein>
    <recommendedName>
        <fullName evidence="7">Trans-enoyl reductase apdC</fullName>
        <ecNumber evidence="9">1.-.-.-</ecNumber>
    </recommendedName>
    <alternativeName>
        <fullName evidence="7">Aspyridones biosynthesis protein C</fullName>
    </alternativeName>
</protein>
<keyword id="KW-0521">NADP</keyword>
<keyword id="KW-0547">Nucleotide-binding</keyword>
<keyword id="KW-0560">Oxidoreductase</keyword>
<keyword id="KW-1185">Reference proteome</keyword>